<keyword id="KW-0042">Antenna complex</keyword>
<keyword id="KW-0274">FAD</keyword>
<keyword id="KW-0285">Flavoprotein</keyword>
<keyword id="KW-0472">Membrane</keyword>
<keyword id="KW-0521">NADP</keyword>
<keyword id="KW-0560">Oxidoreductase</keyword>
<keyword id="KW-0605">Phycobilisome</keyword>
<keyword id="KW-1185">Reference proteome</keyword>
<keyword id="KW-0793">Thylakoid</keyword>
<dbReference type="EC" id="1.18.1.2"/>
<dbReference type="EMBL" id="AB049339">
    <property type="protein sequence ID" value="BAB61060.1"/>
    <property type="molecule type" value="Genomic_DNA"/>
</dbReference>
<dbReference type="EMBL" id="BA000039">
    <property type="protein sequence ID" value="BAC08763.1"/>
    <property type="molecule type" value="Genomic_DNA"/>
</dbReference>
<dbReference type="RefSeq" id="NP_682001.1">
    <property type="nucleotide sequence ID" value="NC_004113.1"/>
</dbReference>
<dbReference type="RefSeq" id="WP_011057053.1">
    <property type="nucleotide sequence ID" value="NC_004113.1"/>
</dbReference>
<dbReference type="SMR" id="Q93RE3"/>
<dbReference type="STRING" id="197221.gene:10747807"/>
<dbReference type="EnsemblBacteria" id="BAC08763">
    <property type="protein sequence ID" value="BAC08763"/>
    <property type="gene ID" value="BAC08763"/>
</dbReference>
<dbReference type="KEGG" id="tel:tlr1211"/>
<dbReference type="PATRIC" id="fig|197221.4.peg.1275"/>
<dbReference type="eggNOG" id="COG0369">
    <property type="taxonomic scope" value="Bacteria"/>
</dbReference>
<dbReference type="BRENDA" id="1.18.1.2">
    <property type="organism ID" value="7781"/>
</dbReference>
<dbReference type="Proteomes" id="UP000000440">
    <property type="component" value="Chromosome"/>
</dbReference>
<dbReference type="GO" id="GO:0030089">
    <property type="term" value="C:phycobilisome"/>
    <property type="evidence" value="ECO:0007669"/>
    <property type="project" value="UniProtKB-KW"/>
</dbReference>
<dbReference type="GO" id="GO:0031676">
    <property type="term" value="C:plasma membrane-derived thylakoid membrane"/>
    <property type="evidence" value="ECO:0007669"/>
    <property type="project" value="UniProtKB-SubCell"/>
</dbReference>
<dbReference type="GO" id="GO:0004324">
    <property type="term" value="F:ferredoxin-NADP+ reductase activity"/>
    <property type="evidence" value="ECO:0007669"/>
    <property type="project" value="UniProtKB-EC"/>
</dbReference>
<dbReference type="CDD" id="cd06208">
    <property type="entry name" value="CYPOR_like_FNR"/>
    <property type="match status" value="1"/>
</dbReference>
<dbReference type="FunFam" id="3.40.50.80:FF:000008">
    <property type="entry name" value="Ferredoxin--NADP reductase, chloroplastic"/>
    <property type="match status" value="1"/>
</dbReference>
<dbReference type="Gene3D" id="3.40.50.80">
    <property type="entry name" value="Nucleotide-binding domain of ferredoxin-NADP reductase (FNR) module"/>
    <property type="match status" value="1"/>
</dbReference>
<dbReference type="Gene3D" id="2.40.30.10">
    <property type="entry name" value="Translation factors"/>
    <property type="match status" value="1"/>
</dbReference>
<dbReference type="InterPro" id="IPR008333">
    <property type="entry name" value="Cbr1-like_FAD-bd_dom"/>
</dbReference>
<dbReference type="InterPro" id="IPR008213">
    <property type="entry name" value="CpcD-like_dom"/>
</dbReference>
<dbReference type="InterPro" id="IPR017927">
    <property type="entry name" value="FAD-bd_FR_type"/>
</dbReference>
<dbReference type="InterPro" id="IPR001709">
    <property type="entry name" value="Flavoprot_Pyr_Nucl_cyt_Rdtase"/>
</dbReference>
<dbReference type="InterPro" id="IPR015701">
    <property type="entry name" value="FNR"/>
</dbReference>
<dbReference type="InterPro" id="IPR039261">
    <property type="entry name" value="FNR_nucleotide-bd"/>
</dbReference>
<dbReference type="InterPro" id="IPR035442">
    <property type="entry name" value="FNR_plant_Cyanobacteria"/>
</dbReference>
<dbReference type="InterPro" id="IPR001433">
    <property type="entry name" value="OxRdtase_FAD/NAD-bd"/>
</dbReference>
<dbReference type="InterPro" id="IPR017938">
    <property type="entry name" value="Riboflavin_synthase-like_b-brl"/>
</dbReference>
<dbReference type="NCBIfam" id="NF045929">
    <property type="entry name" value="FNRPetHCyano"/>
    <property type="match status" value="1"/>
</dbReference>
<dbReference type="PANTHER" id="PTHR43314">
    <property type="match status" value="1"/>
</dbReference>
<dbReference type="Pfam" id="PF01383">
    <property type="entry name" value="CpcD"/>
    <property type="match status" value="1"/>
</dbReference>
<dbReference type="Pfam" id="PF00970">
    <property type="entry name" value="FAD_binding_6"/>
    <property type="match status" value="1"/>
</dbReference>
<dbReference type="Pfam" id="PF00175">
    <property type="entry name" value="NAD_binding_1"/>
    <property type="match status" value="1"/>
</dbReference>
<dbReference type="PIRSF" id="PIRSF501178">
    <property type="entry name" value="FNR-PetH"/>
    <property type="match status" value="1"/>
</dbReference>
<dbReference type="PIRSF" id="PIRSF000361">
    <property type="entry name" value="Frd-NADP+_RD"/>
    <property type="match status" value="1"/>
</dbReference>
<dbReference type="PRINTS" id="PR00371">
    <property type="entry name" value="FPNCR"/>
</dbReference>
<dbReference type="SMART" id="SM01094">
    <property type="entry name" value="CpcD"/>
    <property type="match status" value="1"/>
</dbReference>
<dbReference type="SUPFAM" id="SSF52343">
    <property type="entry name" value="Ferredoxin reductase-like, C-terminal NADP-linked domain"/>
    <property type="match status" value="1"/>
</dbReference>
<dbReference type="SUPFAM" id="SSF63380">
    <property type="entry name" value="Riboflavin synthase domain-like"/>
    <property type="match status" value="1"/>
</dbReference>
<dbReference type="PROSITE" id="PS51441">
    <property type="entry name" value="CPCD_LIKE"/>
    <property type="match status" value="1"/>
</dbReference>
<dbReference type="PROSITE" id="PS51384">
    <property type="entry name" value="FAD_FR"/>
    <property type="match status" value="1"/>
</dbReference>
<feature type="chain" id="PRO_0000167636" description="Ferredoxin--NADP reductase">
    <location>
        <begin position="1"/>
        <end position="386"/>
    </location>
</feature>
<feature type="domain" description="CpcD-like" evidence="3">
    <location>
        <begin position="9"/>
        <end position="67"/>
    </location>
</feature>
<feature type="domain" description="FAD-binding FR-type" evidence="2">
    <location>
        <begin position="104"/>
        <end position="228"/>
    </location>
</feature>
<feature type="binding site" evidence="1">
    <location>
        <begin position="163"/>
        <end position="166"/>
    </location>
    <ligand>
        <name>FAD</name>
        <dbReference type="ChEBI" id="CHEBI:57692"/>
    </ligand>
</feature>
<feature type="binding site" evidence="1">
    <location>
        <position position="166"/>
    </location>
    <ligand>
        <name>NADP(+)</name>
        <dbReference type="ChEBI" id="CHEBI:58349"/>
    </ligand>
</feature>
<feature type="binding site" evidence="1">
    <location>
        <begin position="184"/>
        <end position="186"/>
    </location>
    <ligand>
        <name>FAD</name>
        <dbReference type="ChEBI" id="CHEBI:57692"/>
    </ligand>
</feature>
<feature type="binding site" evidence="1">
    <location>
        <position position="186"/>
    </location>
    <ligand>
        <name>NADP(+)</name>
        <dbReference type="ChEBI" id="CHEBI:58349"/>
    </ligand>
</feature>
<feature type="binding site" evidence="1">
    <location>
        <position position="190"/>
    </location>
    <ligand>
        <name>FAD</name>
        <dbReference type="ChEBI" id="CHEBI:57692"/>
    </ligand>
</feature>
<feature type="binding site" evidence="1">
    <location>
        <begin position="202"/>
        <end position="204"/>
    </location>
    <ligand>
        <name>FAD</name>
        <dbReference type="ChEBI" id="CHEBI:57692"/>
    </ligand>
</feature>
<feature type="binding site" evidence="1">
    <location>
        <position position="243"/>
    </location>
    <ligand>
        <name>FAD</name>
        <dbReference type="ChEBI" id="CHEBI:57692"/>
    </ligand>
</feature>
<feature type="binding site" evidence="1">
    <location>
        <position position="243"/>
    </location>
    <ligand>
        <name>NADP(+)</name>
        <dbReference type="ChEBI" id="CHEBI:58349"/>
    </ligand>
</feature>
<feature type="binding site" evidence="1">
    <location>
        <begin position="275"/>
        <end position="276"/>
    </location>
    <ligand>
        <name>NADP(+)</name>
        <dbReference type="ChEBI" id="CHEBI:58349"/>
    </ligand>
</feature>
<feature type="binding site" evidence="1">
    <location>
        <begin position="305"/>
        <end position="306"/>
    </location>
    <ligand>
        <name>NADP(+)</name>
        <dbReference type="ChEBI" id="CHEBI:58349"/>
    </ligand>
</feature>
<feature type="binding site" evidence="1">
    <location>
        <begin position="315"/>
        <end position="319"/>
    </location>
    <ligand>
        <name>NADP(+)</name>
        <dbReference type="ChEBI" id="CHEBI:58349"/>
    </ligand>
</feature>
<feature type="binding site" evidence="1">
    <location>
        <begin position="344"/>
        <end position="345"/>
    </location>
    <ligand>
        <name>NADP(+)</name>
        <dbReference type="ChEBI" id="CHEBI:58349"/>
    </ligand>
</feature>
<feature type="binding site" evidence="1">
    <location>
        <position position="384"/>
    </location>
    <ligand>
        <name>NADP(+)</name>
        <dbReference type="ChEBI" id="CHEBI:58349"/>
    </ligand>
</feature>
<gene>
    <name type="primary">petH</name>
    <name type="ordered locus">tlr1211</name>
</gene>
<sequence length="386" mass="43415">MYNATNSRSRMFRYEVVGLRQTAETEKTNYAIRNSGSQFFNVPYDRMNQFMQQITRWGGKIVSIQPLNGTVAPLAATTEPAANNGAAPVKEKKVDIPVNIYRPNNPCIGKVISNEELVREGGEGTVKHIIFDISGTELRYLEGQSIGIIPAGTDANGKPHKLRLYSIASTRHGDFQDDKTVSLCVRRLEYKDKETGETIYGVCSSYLNQLQPGDEVKITGPVGKEMLLSDDPEATIIMLATGTGIAPFRAFLWRMFKENNPDYQFKGLAWLFFGVAYTANILYKDELEAIQAQYPDHFRLTYAISREQKTPDGGKMYIQGRIAEHADEIWQLLQKKNTHVYMCGLRGMEPGIDEAMTAAAAKNGADWQEFLKGTLKKEGRWHVETY</sequence>
<reference key="1">
    <citation type="journal article" date="2002" name="Plant Cell Physiol.">
        <title>The complete purification and characterization of three forms of ferredoxin-NADP(+) oxidoreductase from a thermophilic cyanobacterium Synechococcus elongatus.</title>
        <authorList>
            <person name="Nakajima M."/>
            <person name="Sakamoto T."/>
            <person name="Wada K."/>
        </authorList>
    </citation>
    <scope>NUCLEOTIDE SEQUENCE [GENOMIC DNA]</scope>
</reference>
<reference key="2">
    <citation type="journal article" date="2002" name="DNA Res.">
        <title>Complete genome structure of the thermophilic cyanobacterium Thermosynechococcus elongatus BP-1.</title>
        <authorList>
            <person name="Nakamura Y."/>
            <person name="Kaneko T."/>
            <person name="Sato S."/>
            <person name="Ikeuchi M."/>
            <person name="Katoh H."/>
            <person name="Sasamoto S."/>
            <person name="Watanabe A."/>
            <person name="Iriguchi M."/>
            <person name="Kawashima K."/>
            <person name="Kimura T."/>
            <person name="Kishida Y."/>
            <person name="Kiyokawa C."/>
            <person name="Kohara M."/>
            <person name="Matsumoto M."/>
            <person name="Matsuno A."/>
            <person name="Nakazaki N."/>
            <person name="Shimpo S."/>
            <person name="Sugimoto M."/>
            <person name="Takeuchi C."/>
            <person name="Yamada M."/>
            <person name="Tabata S."/>
        </authorList>
    </citation>
    <scope>NUCLEOTIDE SEQUENCE [LARGE SCALE GENOMIC DNA]</scope>
    <source>
        <strain>NIES-2133 / IAM M-273 / BP-1</strain>
    </source>
</reference>
<comment type="catalytic activity">
    <reaction>
        <text>2 reduced [2Fe-2S]-[ferredoxin] + NADP(+) + H(+) = 2 oxidized [2Fe-2S]-[ferredoxin] + NADPH</text>
        <dbReference type="Rhea" id="RHEA:20125"/>
        <dbReference type="Rhea" id="RHEA-COMP:10000"/>
        <dbReference type="Rhea" id="RHEA-COMP:10001"/>
        <dbReference type="ChEBI" id="CHEBI:15378"/>
        <dbReference type="ChEBI" id="CHEBI:33737"/>
        <dbReference type="ChEBI" id="CHEBI:33738"/>
        <dbReference type="ChEBI" id="CHEBI:57783"/>
        <dbReference type="ChEBI" id="CHEBI:58349"/>
        <dbReference type="EC" id="1.18.1.2"/>
    </reaction>
</comment>
<comment type="cofactor">
    <cofactor evidence="1">
        <name>FAD</name>
        <dbReference type="ChEBI" id="CHEBI:57692"/>
    </cofactor>
</comment>
<comment type="subcellular location">
    <subcellularLocation>
        <location evidence="1">Cellular thylakoid membrane</location>
        <topology evidence="1">Peripheral membrane protein</topology>
        <orientation evidence="1">Cytoplasmic side</orientation>
    </subcellularLocation>
    <text evidence="1">May be bound to the thylakoid membrane or anchored to the thylakoid-bound phycobilisomes.</text>
</comment>
<comment type="similarity">
    <text evidence="4">Belongs to the ferredoxin--NADP reductase type 1 family.</text>
</comment>
<name>FENR_THEVB</name>
<proteinExistence type="inferred from homology"/>
<protein>
    <recommendedName>
        <fullName>Ferredoxin--NADP reductase</fullName>
        <shortName>FNR</shortName>
        <ecNumber>1.18.1.2</ecNumber>
    </recommendedName>
</protein>
<accession>Q93RE3</accession>
<organism>
    <name type="scientific">Thermosynechococcus vestitus (strain NIES-2133 / IAM M-273 / BP-1)</name>
    <dbReference type="NCBI Taxonomy" id="197221"/>
    <lineage>
        <taxon>Bacteria</taxon>
        <taxon>Bacillati</taxon>
        <taxon>Cyanobacteriota</taxon>
        <taxon>Cyanophyceae</taxon>
        <taxon>Acaryochloridales</taxon>
        <taxon>Thermosynechococcaceae</taxon>
        <taxon>Thermosynechococcus</taxon>
    </lineage>
</organism>
<evidence type="ECO:0000250" key="1"/>
<evidence type="ECO:0000255" key="2">
    <source>
        <dbReference type="PROSITE-ProRule" id="PRU00716"/>
    </source>
</evidence>
<evidence type="ECO:0000255" key="3">
    <source>
        <dbReference type="PROSITE-ProRule" id="PRU00771"/>
    </source>
</evidence>
<evidence type="ECO:0000305" key="4"/>